<keyword id="KW-0067">ATP-binding</keyword>
<keyword id="KW-0138">CF(0)</keyword>
<keyword id="KW-0375">Hydrogen ion transport</keyword>
<keyword id="KW-0406">Ion transport</keyword>
<keyword id="KW-0446">Lipid-binding</keyword>
<keyword id="KW-0472">Membrane</keyword>
<keyword id="KW-0496">Mitochondrion</keyword>
<keyword id="KW-0547">Nucleotide-binding</keyword>
<keyword id="KW-0812">Transmembrane</keyword>
<keyword id="KW-1133">Transmembrane helix</keyword>
<keyword id="KW-0813">Transport</keyword>
<gene>
    <name type="primary">ATP9</name>
</gene>
<comment type="function">
    <text>This protein is one of the chains of the nonenzymatic membrane component (F0) of mitochondrial ATPase.</text>
</comment>
<comment type="subunit">
    <text>F-type ATPases have 2 components, CF(1) - the catalytic core - and CF(0) - the membrane proton channel. CF(1) has five subunits: alpha(3), beta(3), gamma(1), delta(1), epsilon(1). CF(0) has three main subunits: a, b and c.</text>
</comment>
<comment type="subcellular location">
    <subcellularLocation>
        <location evidence="3">Mitochondrion membrane</location>
        <topology evidence="3">Multi-pass membrane protein</topology>
    </subcellularLocation>
</comment>
<comment type="similarity">
    <text evidence="3">Belongs to the ATPase C chain family.</text>
</comment>
<geneLocation type="mitochondrion"/>
<sequence length="76" mass="7874">MNVTLQSAKMIGAGLATIGLTGVGAGVGIVFGSLVMAYARNPSLKQQLFGYTILGFALTEAVALFALMMAFLILFT</sequence>
<reference key="1">
    <citation type="journal article" date="1995" name="J. Mol. Biol.">
        <title>Complete sequence of the mitochondrial DNA of the rhodophyte Chondrus crispus (Gigartinales). Gene content and genome organization.</title>
        <authorList>
            <person name="Leblanc C."/>
            <person name="Boyen C."/>
            <person name="Richard O."/>
            <person name="Bonnard G."/>
            <person name="Grienenberger J.-M."/>
            <person name="Kloareg B."/>
        </authorList>
    </citation>
    <scope>NUCLEOTIDE SEQUENCE [GENOMIC DNA]</scope>
    <source>
        <tissue>Apices</tissue>
    </source>
</reference>
<protein>
    <recommendedName>
        <fullName>ATP synthase subunit 9, mitochondrial</fullName>
    </recommendedName>
    <alternativeName>
        <fullName>Lipid-binding protein</fullName>
    </alternativeName>
</protein>
<organism>
    <name type="scientific">Chondrus crispus</name>
    <name type="common">Carrageen Irish moss</name>
    <name type="synonym">Polymorpha crispa</name>
    <dbReference type="NCBI Taxonomy" id="2769"/>
    <lineage>
        <taxon>Eukaryota</taxon>
        <taxon>Rhodophyta</taxon>
        <taxon>Florideophyceae</taxon>
        <taxon>Rhodymeniophycidae</taxon>
        <taxon>Gigartinales</taxon>
        <taxon>Gigartinaceae</taxon>
        <taxon>Chondrus</taxon>
    </lineage>
</organism>
<name>ATP9_CHOCR</name>
<proteinExistence type="inferred from homology"/>
<evidence type="ECO:0000250" key="1"/>
<evidence type="ECO:0000255" key="2"/>
<evidence type="ECO:0000305" key="3"/>
<feature type="chain" id="PRO_0000112211" description="ATP synthase subunit 9, mitochondrial">
    <location>
        <begin position="1"/>
        <end position="76"/>
    </location>
</feature>
<feature type="transmembrane region" description="Helical" evidence="2">
    <location>
        <begin position="11"/>
        <end position="31"/>
    </location>
</feature>
<feature type="transmembrane region" description="Helical" evidence="2">
    <location>
        <begin position="53"/>
        <end position="73"/>
    </location>
</feature>
<feature type="site" description="Reversibly protonated during proton transport" evidence="1">
    <location>
        <position position="60"/>
    </location>
</feature>
<accession>P48880</accession>
<dbReference type="EMBL" id="Z47547">
    <property type="protein sequence ID" value="CAA87613.1"/>
    <property type="molecule type" value="Genomic_DNA"/>
</dbReference>
<dbReference type="PIR" id="S59097">
    <property type="entry name" value="S59097"/>
</dbReference>
<dbReference type="RefSeq" id="NP_062490.1">
    <property type="nucleotide sequence ID" value="NC_001677.2"/>
</dbReference>
<dbReference type="SMR" id="P48880"/>
<dbReference type="GeneID" id="809383"/>
<dbReference type="KEGG" id="ccp:ChcroMp11"/>
<dbReference type="GO" id="GO:0031966">
    <property type="term" value="C:mitochondrial membrane"/>
    <property type="evidence" value="ECO:0007669"/>
    <property type="project" value="UniProtKB-SubCell"/>
</dbReference>
<dbReference type="GO" id="GO:0045259">
    <property type="term" value="C:proton-transporting ATP synthase complex"/>
    <property type="evidence" value="ECO:0007669"/>
    <property type="project" value="UniProtKB-KW"/>
</dbReference>
<dbReference type="GO" id="GO:0033177">
    <property type="term" value="C:proton-transporting two-sector ATPase complex, proton-transporting domain"/>
    <property type="evidence" value="ECO:0007669"/>
    <property type="project" value="InterPro"/>
</dbReference>
<dbReference type="GO" id="GO:0005524">
    <property type="term" value="F:ATP binding"/>
    <property type="evidence" value="ECO:0007669"/>
    <property type="project" value="UniProtKB-KW"/>
</dbReference>
<dbReference type="GO" id="GO:0008289">
    <property type="term" value="F:lipid binding"/>
    <property type="evidence" value="ECO:0007669"/>
    <property type="project" value="UniProtKB-KW"/>
</dbReference>
<dbReference type="GO" id="GO:0015078">
    <property type="term" value="F:proton transmembrane transporter activity"/>
    <property type="evidence" value="ECO:0007669"/>
    <property type="project" value="InterPro"/>
</dbReference>
<dbReference type="GO" id="GO:0015986">
    <property type="term" value="P:proton motive force-driven ATP synthesis"/>
    <property type="evidence" value="ECO:0007669"/>
    <property type="project" value="InterPro"/>
</dbReference>
<dbReference type="CDD" id="cd18182">
    <property type="entry name" value="ATP-synt_Fo_c_ATP5G3"/>
    <property type="match status" value="1"/>
</dbReference>
<dbReference type="FunFam" id="1.20.20.10:FF:000003">
    <property type="entry name" value="Atp synthase f complex subunit mitochondrial"/>
    <property type="match status" value="1"/>
</dbReference>
<dbReference type="Gene3D" id="1.20.20.10">
    <property type="entry name" value="F1F0 ATP synthase subunit C"/>
    <property type="match status" value="1"/>
</dbReference>
<dbReference type="HAMAP" id="MF_01396">
    <property type="entry name" value="ATP_synth_c_bact"/>
    <property type="match status" value="1"/>
</dbReference>
<dbReference type="InterPro" id="IPR000454">
    <property type="entry name" value="ATP_synth_F0_csu"/>
</dbReference>
<dbReference type="InterPro" id="IPR020537">
    <property type="entry name" value="ATP_synth_F0_csu_DDCD_BS"/>
</dbReference>
<dbReference type="InterPro" id="IPR038662">
    <property type="entry name" value="ATP_synth_F0_csu_sf"/>
</dbReference>
<dbReference type="InterPro" id="IPR002379">
    <property type="entry name" value="ATPase_proteolipid_c-like_dom"/>
</dbReference>
<dbReference type="InterPro" id="IPR035921">
    <property type="entry name" value="F/V-ATP_Csub_sf"/>
</dbReference>
<dbReference type="PANTHER" id="PTHR10031">
    <property type="entry name" value="ATP SYNTHASE LIPID-BINDING PROTEIN, MITOCHONDRIAL"/>
    <property type="match status" value="1"/>
</dbReference>
<dbReference type="PANTHER" id="PTHR10031:SF0">
    <property type="entry name" value="ATPASE PROTEIN 9"/>
    <property type="match status" value="1"/>
</dbReference>
<dbReference type="Pfam" id="PF00137">
    <property type="entry name" value="ATP-synt_C"/>
    <property type="match status" value="1"/>
</dbReference>
<dbReference type="PRINTS" id="PR00124">
    <property type="entry name" value="ATPASEC"/>
</dbReference>
<dbReference type="SUPFAM" id="SSF81333">
    <property type="entry name" value="F1F0 ATP synthase subunit C"/>
    <property type="match status" value="1"/>
</dbReference>
<dbReference type="PROSITE" id="PS00605">
    <property type="entry name" value="ATPASE_C"/>
    <property type="match status" value="1"/>
</dbReference>